<proteinExistence type="inferred from homology"/>
<dbReference type="EC" id="1.14.-.-"/>
<dbReference type="EMBL" id="AE000516">
    <property type="protein sequence ID" value="AAK47477.1"/>
    <property type="molecule type" value="Genomic_DNA"/>
</dbReference>
<dbReference type="PIR" id="D70649">
    <property type="entry name" value="D70649"/>
</dbReference>
<dbReference type="RefSeq" id="WP_003899900.1">
    <property type="nucleotide sequence ID" value="NZ_KK341227.1"/>
</dbReference>
<dbReference type="SMR" id="P9WPM6"/>
<dbReference type="KEGG" id="mtc:MT3145"/>
<dbReference type="PATRIC" id="fig|83331.31.peg.3388"/>
<dbReference type="HOGENOM" id="CLU_001570_15_0_11"/>
<dbReference type="Proteomes" id="UP000001020">
    <property type="component" value="Chromosome"/>
</dbReference>
<dbReference type="GO" id="GO:0020037">
    <property type="term" value="F:heme binding"/>
    <property type="evidence" value="ECO:0007669"/>
    <property type="project" value="InterPro"/>
</dbReference>
<dbReference type="GO" id="GO:0005506">
    <property type="term" value="F:iron ion binding"/>
    <property type="evidence" value="ECO:0007669"/>
    <property type="project" value="InterPro"/>
</dbReference>
<dbReference type="GO" id="GO:0004497">
    <property type="term" value="F:monooxygenase activity"/>
    <property type="evidence" value="ECO:0007669"/>
    <property type="project" value="UniProtKB-KW"/>
</dbReference>
<dbReference type="GO" id="GO:0016705">
    <property type="term" value="F:oxidoreductase activity, acting on paired donors, with incorporation or reduction of molecular oxygen"/>
    <property type="evidence" value="ECO:0007669"/>
    <property type="project" value="InterPro"/>
</dbReference>
<dbReference type="GO" id="GO:0016125">
    <property type="term" value="P:sterol metabolic process"/>
    <property type="evidence" value="ECO:0007669"/>
    <property type="project" value="TreeGrafter"/>
</dbReference>
<dbReference type="CDD" id="cd11045">
    <property type="entry name" value="CYP136-like"/>
    <property type="match status" value="1"/>
</dbReference>
<dbReference type="Gene3D" id="1.10.630.10">
    <property type="entry name" value="Cytochrome P450"/>
    <property type="match status" value="1"/>
</dbReference>
<dbReference type="InterPro" id="IPR001128">
    <property type="entry name" value="Cyt_P450"/>
</dbReference>
<dbReference type="InterPro" id="IPR017972">
    <property type="entry name" value="Cyt_P450_CS"/>
</dbReference>
<dbReference type="InterPro" id="IPR002403">
    <property type="entry name" value="Cyt_P450_E_grp-IV"/>
</dbReference>
<dbReference type="InterPro" id="IPR036396">
    <property type="entry name" value="Cyt_P450_sf"/>
</dbReference>
<dbReference type="PANTHER" id="PTHR24286">
    <property type="entry name" value="CYTOCHROME P450 26"/>
    <property type="match status" value="1"/>
</dbReference>
<dbReference type="PANTHER" id="PTHR24286:SF24">
    <property type="entry name" value="LANOSTEROL 14-ALPHA DEMETHYLASE"/>
    <property type="match status" value="1"/>
</dbReference>
<dbReference type="Pfam" id="PF00067">
    <property type="entry name" value="p450"/>
    <property type="match status" value="1"/>
</dbReference>
<dbReference type="PRINTS" id="PR00465">
    <property type="entry name" value="EP450IV"/>
</dbReference>
<dbReference type="SUPFAM" id="SSF48264">
    <property type="entry name" value="Cytochrome P450"/>
    <property type="match status" value="1"/>
</dbReference>
<dbReference type="PROSITE" id="PS00086">
    <property type="entry name" value="CYTOCHROME_P450"/>
    <property type="match status" value="1"/>
</dbReference>
<sequence>MATIHPPAYLLDQAKRRFTPSFNNFPGMSLVEHMLLNTKFPEKKLAEPPPGSGLKPVVGDAGLPILGHMIEMLRGGPDYLMFLYKTKGPVVFGDSAVLPGVAALGPDAAQVIYSNRNKDYSQQGWVPVIGPFFHRGLMLLDFEEHMFHRRIMQEAFVRSRLAGYLEQMDRVVSRVVADDWVVNDARFLVYPAMKALTLDIASMVFMGHEPGTDHELVTKVNKAFTITTRAGNAVIRTSVPPFTWWRGLRARELLENYFTARVKERREASGNDLLTVLCQTEDDDGNRFSDADIVNHMIFLMMAAHDTSTSTATTMAYQLAAHPEWQQRCRDESDRHGDGPLDIESLEQLESLDLVMNESIRLVTPVQWAMRQTVRDTELLGYYLPKGTNVIAYPGMNHRLPEIWTDPLTFDPERFTEPRNEHKRHRYAFTPFGGGVHKCIGMVFDQLEIKTILHRLLRRYRLELSRPDYQPRWDYSAMPIPMDGMPIVLRPR</sequence>
<keyword id="KW-0349">Heme</keyword>
<keyword id="KW-0408">Iron</keyword>
<keyword id="KW-0479">Metal-binding</keyword>
<keyword id="KW-0503">Monooxygenase</keyword>
<keyword id="KW-0560">Oxidoreductase</keyword>
<keyword id="KW-1185">Reference proteome</keyword>
<reference key="1">
    <citation type="journal article" date="2002" name="J. Bacteriol.">
        <title>Whole-genome comparison of Mycobacterium tuberculosis clinical and laboratory strains.</title>
        <authorList>
            <person name="Fleischmann R.D."/>
            <person name="Alland D."/>
            <person name="Eisen J.A."/>
            <person name="Carpenter L."/>
            <person name="White O."/>
            <person name="Peterson J.D."/>
            <person name="DeBoy R.T."/>
            <person name="Dodson R.J."/>
            <person name="Gwinn M.L."/>
            <person name="Haft D.H."/>
            <person name="Hickey E.K."/>
            <person name="Kolonay J.F."/>
            <person name="Nelson W.C."/>
            <person name="Umayam L.A."/>
            <person name="Ermolaeva M.D."/>
            <person name="Salzberg S.L."/>
            <person name="Delcher A."/>
            <person name="Utterback T.R."/>
            <person name="Weidman J.F."/>
            <person name="Khouri H.M."/>
            <person name="Gill J."/>
            <person name="Mikula A."/>
            <person name="Bishai W."/>
            <person name="Jacobs W.R. Jr."/>
            <person name="Venter J.C."/>
            <person name="Fraser C.M."/>
        </authorList>
    </citation>
    <scope>NUCLEOTIDE SEQUENCE [LARGE SCALE GENOMIC DNA]</scope>
    <source>
        <strain>CDC 1551 / Oshkosh</strain>
    </source>
</reference>
<gene>
    <name type="primary">cyp136</name>
    <name type="ordered locus">MT3145</name>
</gene>
<name>CP136_MYCTO</name>
<protein>
    <recommendedName>
        <fullName>Putative cytochrome P450 136</fullName>
        <ecNumber>1.14.-.-</ecNumber>
    </recommendedName>
</protein>
<evidence type="ECO:0000250" key="1"/>
<evidence type="ECO:0000305" key="2"/>
<accession>P9WPM6</accession>
<accession>L0TEE3</accession>
<accession>P95099</accession>
<organism>
    <name type="scientific">Mycobacterium tuberculosis (strain CDC 1551 / Oshkosh)</name>
    <dbReference type="NCBI Taxonomy" id="83331"/>
    <lineage>
        <taxon>Bacteria</taxon>
        <taxon>Bacillati</taxon>
        <taxon>Actinomycetota</taxon>
        <taxon>Actinomycetes</taxon>
        <taxon>Mycobacteriales</taxon>
        <taxon>Mycobacteriaceae</taxon>
        <taxon>Mycobacterium</taxon>
        <taxon>Mycobacterium tuberculosis complex</taxon>
    </lineage>
</organism>
<feature type="chain" id="PRO_0000426925" description="Putative cytochrome P450 136">
    <location>
        <begin position="1"/>
        <end position="492"/>
    </location>
</feature>
<feature type="binding site" description="axial binding residue" evidence="1">
    <location>
        <position position="439"/>
    </location>
    <ligand>
        <name>heme</name>
        <dbReference type="ChEBI" id="CHEBI:30413"/>
    </ligand>
    <ligandPart>
        <name>Fe</name>
        <dbReference type="ChEBI" id="CHEBI:18248"/>
    </ligandPart>
</feature>
<comment type="cofactor">
    <cofactor evidence="1">
        <name>heme</name>
        <dbReference type="ChEBI" id="CHEBI:30413"/>
    </cofactor>
</comment>
<comment type="similarity">
    <text evidence="2">Belongs to the cytochrome P450 family.</text>
</comment>